<sequence>MENVITNNNKGLPKSILKFIPEPIQPLFENPFFSAGFGLIGVGSILAMGRKGFQQAMIQSRRYFFVSVEVPSKDKSFHWLMEWLATKKNKNTRHVSVETTFHQHESGDIVSRINFVPSVGTHYVFYRGRVIKVERSREKNVIDMNSGNLWESITLTTLGTGRQVFQNLIEEAKEMALEKEEGKTLIYTSMGTDWRRFGHPRRKRPISSVILDKGKSELIIQDVKKFLNNSDWYNDRGIPYRRGYLLYGPPGTGKSSFITALAGELQLSICILNLAGKSVSDTSLNQLLATAPQRSIILLEDIDSAIQTGNHDLSAKSNSANAPSISSGGLQYQGYYGNPSVSSGGSALTFSGLLNALDGVAASEGRILFMTTNHLEKLDKVLIRPGRVDLQIEIGLCSSYQMEQMFLKFYPTDFDLAKQFVEKLENYKFSPAQLQAYFMTYSNNSIEAINNLNELIKK</sequence>
<evidence type="ECO:0000250" key="1">
    <source>
        <dbReference type="UniProtKB" id="P32839"/>
    </source>
</evidence>
<evidence type="ECO:0000250" key="2">
    <source>
        <dbReference type="UniProtKB" id="Q9Y276"/>
    </source>
</evidence>
<evidence type="ECO:0000255" key="3"/>
<evidence type="ECO:0000305" key="4"/>
<name>BCS1B_DICDI</name>
<comment type="function">
    <text evidence="2">Chaperone necessary for the assembly of mitochondrial respiratory chain complex III.</text>
</comment>
<comment type="catalytic activity">
    <reaction evidence="1">
        <text>ATP + H2O = ADP + phosphate + H(+)</text>
        <dbReference type="Rhea" id="RHEA:13065"/>
        <dbReference type="ChEBI" id="CHEBI:15377"/>
        <dbReference type="ChEBI" id="CHEBI:15378"/>
        <dbReference type="ChEBI" id="CHEBI:30616"/>
        <dbReference type="ChEBI" id="CHEBI:43474"/>
        <dbReference type="ChEBI" id="CHEBI:456216"/>
    </reaction>
    <physiologicalReaction direction="left-to-right" evidence="1">
        <dbReference type="Rhea" id="RHEA:13066"/>
    </physiologicalReaction>
</comment>
<comment type="subcellular location">
    <subcellularLocation>
        <location evidence="2">Mitochondrion inner membrane</location>
        <topology evidence="3">Single-pass membrane protein</topology>
    </subcellularLocation>
</comment>
<comment type="similarity">
    <text evidence="4">Belongs to the AAA ATPase family. BCS1 subfamily.</text>
</comment>
<dbReference type="EC" id="3.6.1.-" evidence="1"/>
<dbReference type="EMBL" id="AAFI02000186">
    <property type="protein sequence ID" value="EAL61485.1"/>
    <property type="molecule type" value="Genomic_DNA"/>
</dbReference>
<dbReference type="SMR" id="Q54DY9"/>
<dbReference type="FunCoup" id="Q54DY9">
    <property type="interactions" value="292"/>
</dbReference>
<dbReference type="STRING" id="44689.Q54DY9"/>
<dbReference type="PaxDb" id="44689-DDB0266726"/>
<dbReference type="EnsemblProtists" id="EAL61485">
    <property type="protein sequence ID" value="EAL61485"/>
    <property type="gene ID" value="DDB_G0291910"/>
</dbReference>
<dbReference type="KEGG" id="ddi:DDB_G0291910"/>
<dbReference type="dictyBase" id="DDB_G0291910">
    <property type="gene designation" value="bcs1lB"/>
</dbReference>
<dbReference type="VEuPathDB" id="AmoebaDB:DDB_G0291910"/>
<dbReference type="eggNOG" id="KOG0743">
    <property type="taxonomic scope" value="Eukaryota"/>
</dbReference>
<dbReference type="HOGENOM" id="CLU_010189_6_2_1"/>
<dbReference type="InParanoid" id="Q54DY9"/>
<dbReference type="OMA" id="WMTLYQR"/>
<dbReference type="PhylomeDB" id="Q54DY9"/>
<dbReference type="PRO" id="PR:Q54DY9"/>
<dbReference type="Proteomes" id="UP000002195">
    <property type="component" value="Chromosome 6"/>
</dbReference>
<dbReference type="GO" id="GO:0005743">
    <property type="term" value="C:mitochondrial inner membrane"/>
    <property type="evidence" value="ECO:0000318"/>
    <property type="project" value="GO_Central"/>
</dbReference>
<dbReference type="GO" id="GO:0005739">
    <property type="term" value="C:mitochondrion"/>
    <property type="evidence" value="ECO:0000250"/>
    <property type="project" value="dictyBase"/>
</dbReference>
<dbReference type="GO" id="GO:0005524">
    <property type="term" value="F:ATP binding"/>
    <property type="evidence" value="ECO:0007669"/>
    <property type="project" value="UniProtKB-KW"/>
</dbReference>
<dbReference type="GO" id="GO:0016887">
    <property type="term" value="F:ATP hydrolysis activity"/>
    <property type="evidence" value="ECO:0007669"/>
    <property type="project" value="InterPro"/>
</dbReference>
<dbReference type="GO" id="GO:0008320">
    <property type="term" value="F:protein transmembrane transporter activity"/>
    <property type="evidence" value="ECO:0000250"/>
    <property type="project" value="dictyBase"/>
</dbReference>
<dbReference type="GO" id="GO:0051131">
    <property type="term" value="P:chaperone-mediated protein complex assembly"/>
    <property type="evidence" value="ECO:0000250"/>
    <property type="project" value="dictyBase"/>
</dbReference>
<dbReference type="GO" id="GO:0034551">
    <property type="term" value="P:mitochondrial respiratory chain complex III assembly"/>
    <property type="evidence" value="ECO:0000318"/>
    <property type="project" value="GO_Central"/>
</dbReference>
<dbReference type="GO" id="GO:0032979">
    <property type="term" value="P:protein insertion into mitochondrial inner membrane from matrix"/>
    <property type="evidence" value="ECO:0000318"/>
    <property type="project" value="GO_Central"/>
</dbReference>
<dbReference type="CDD" id="cd19510">
    <property type="entry name" value="RecA-like_BCS1"/>
    <property type="match status" value="1"/>
</dbReference>
<dbReference type="FunFam" id="3.40.50.300:FF:000768">
    <property type="entry name" value="Probable mitochondrial chaperone bcs1"/>
    <property type="match status" value="1"/>
</dbReference>
<dbReference type="Gene3D" id="3.40.50.300">
    <property type="entry name" value="P-loop containing nucleotide triphosphate hydrolases"/>
    <property type="match status" value="1"/>
</dbReference>
<dbReference type="InterPro" id="IPR003593">
    <property type="entry name" value="AAA+_ATPase"/>
</dbReference>
<dbReference type="InterPro" id="IPR003959">
    <property type="entry name" value="ATPase_AAA_core"/>
</dbReference>
<dbReference type="InterPro" id="IPR014851">
    <property type="entry name" value="BCS1_N"/>
</dbReference>
<dbReference type="InterPro" id="IPR050747">
    <property type="entry name" value="Mitochondrial_chaperone_BCS1"/>
</dbReference>
<dbReference type="InterPro" id="IPR027417">
    <property type="entry name" value="P-loop_NTPase"/>
</dbReference>
<dbReference type="PANTHER" id="PTHR23070">
    <property type="entry name" value="BCS1 AAA-TYPE ATPASE"/>
    <property type="match status" value="1"/>
</dbReference>
<dbReference type="Pfam" id="PF00004">
    <property type="entry name" value="AAA"/>
    <property type="match status" value="2"/>
</dbReference>
<dbReference type="Pfam" id="PF25426">
    <property type="entry name" value="AAA_lid_BCS1"/>
    <property type="match status" value="1"/>
</dbReference>
<dbReference type="Pfam" id="PF08740">
    <property type="entry name" value="BCS1_N"/>
    <property type="match status" value="1"/>
</dbReference>
<dbReference type="SMART" id="SM00382">
    <property type="entry name" value="AAA"/>
    <property type="match status" value="1"/>
</dbReference>
<dbReference type="SMART" id="SM01024">
    <property type="entry name" value="BCS1_N"/>
    <property type="match status" value="1"/>
</dbReference>
<dbReference type="SUPFAM" id="SSF52540">
    <property type="entry name" value="P-loop containing nucleoside triphosphate hydrolases"/>
    <property type="match status" value="1"/>
</dbReference>
<gene>
    <name type="primary">bcsl1b</name>
    <name type="ORF">DDB_G0291910</name>
</gene>
<reference key="1">
    <citation type="journal article" date="2005" name="Nature">
        <title>The genome of the social amoeba Dictyostelium discoideum.</title>
        <authorList>
            <person name="Eichinger L."/>
            <person name="Pachebat J.A."/>
            <person name="Gloeckner G."/>
            <person name="Rajandream M.A."/>
            <person name="Sucgang R."/>
            <person name="Berriman M."/>
            <person name="Song J."/>
            <person name="Olsen R."/>
            <person name="Szafranski K."/>
            <person name="Xu Q."/>
            <person name="Tunggal B."/>
            <person name="Kummerfeld S."/>
            <person name="Madera M."/>
            <person name="Konfortov B.A."/>
            <person name="Rivero F."/>
            <person name="Bankier A.T."/>
            <person name="Lehmann R."/>
            <person name="Hamlin N."/>
            <person name="Davies R."/>
            <person name="Gaudet P."/>
            <person name="Fey P."/>
            <person name="Pilcher K."/>
            <person name="Chen G."/>
            <person name="Saunders D."/>
            <person name="Sodergren E.J."/>
            <person name="Davis P."/>
            <person name="Kerhornou A."/>
            <person name="Nie X."/>
            <person name="Hall N."/>
            <person name="Anjard C."/>
            <person name="Hemphill L."/>
            <person name="Bason N."/>
            <person name="Farbrother P."/>
            <person name="Desany B."/>
            <person name="Just E."/>
            <person name="Morio T."/>
            <person name="Rost R."/>
            <person name="Churcher C.M."/>
            <person name="Cooper J."/>
            <person name="Haydock S."/>
            <person name="van Driessche N."/>
            <person name="Cronin A."/>
            <person name="Goodhead I."/>
            <person name="Muzny D.M."/>
            <person name="Mourier T."/>
            <person name="Pain A."/>
            <person name="Lu M."/>
            <person name="Harper D."/>
            <person name="Lindsay R."/>
            <person name="Hauser H."/>
            <person name="James K.D."/>
            <person name="Quiles M."/>
            <person name="Madan Babu M."/>
            <person name="Saito T."/>
            <person name="Buchrieser C."/>
            <person name="Wardroper A."/>
            <person name="Felder M."/>
            <person name="Thangavelu M."/>
            <person name="Johnson D."/>
            <person name="Knights A."/>
            <person name="Loulseged H."/>
            <person name="Mungall K.L."/>
            <person name="Oliver K."/>
            <person name="Price C."/>
            <person name="Quail M.A."/>
            <person name="Urushihara H."/>
            <person name="Hernandez J."/>
            <person name="Rabbinowitsch E."/>
            <person name="Steffen D."/>
            <person name="Sanders M."/>
            <person name="Ma J."/>
            <person name="Kohara Y."/>
            <person name="Sharp S."/>
            <person name="Simmonds M.N."/>
            <person name="Spiegler S."/>
            <person name="Tivey A."/>
            <person name="Sugano S."/>
            <person name="White B."/>
            <person name="Walker D."/>
            <person name="Woodward J.R."/>
            <person name="Winckler T."/>
            <person name="Tanaka Y."/>
            <person name="Shaulsky G."/>
            <person name="Schleicher M."/>
            <person name="Weinstock G.M."/>
            <person name="Rosenthal A."/>
            <person name="Cox E.C."/>
            <person name="Chisholm R.L."/>
            <person name="Gibbs R.A."/>
            <person name="Loomis W.F."/>
            <person name="Platzer M."/>
            <person name="Kay R.R."/>
            <person name="Williams J.G."/>
            <person name="Dear P.H."/>
            <person name="Noegel A.A."/>
            <person name="Barrell B.G."/>
            <person name="Kuspa A."/>
        </authorList>
    </citation>
    <scope>NUCLEOTIDE SEQUENCE [LARGE SCALE GENOMIC DNA]</scope>
    <source>
        <strain>AX4</strain>
    </source>
</reference>
<accession>Q54DY9</accession>
<proteinExistence type="inferred from homology"/>
<keyword id="KW-0067">ATP-binding</keyword>
<keyword id="KW-0143">Chaperone</keyword>
<keyword id="KW-0378">Hydrolase</keyword>
<keyword id="KW-0472">Membrane</keyword>
<keyword id="KW-0496">Mitochondrion</keyword>
<keyword id="KW-0999">Mitochondrion inner membrane</keyword>
<keyword id="KW-0547">Nucleotide-binding</keyword>
<keyword id="KW-1185">Reference proteome</keyword>
<keyword id="KW-0812">Transmembrane</keyword>
<keyword id="KW-1133">Transmembrane helix</keyword>
<protein>
    <recommendedName>
        <fullName>Probable mitochondrial chaperone BCS1-B</fullName>
        <ecNumber evidence="1">3.6.1.-</ecNumber>
    </recommendedName>
    <alternativeName>
        <fullName>BCS1-like protein 2</fullName>
    </alternativeName>
</protein>
<feature type="chain" id="PRO_0000327921" description="Probable mitochondrial chaperone BCS1-B">
    <location>
        <begin position="1"/>
        <end position="458"/>
    </location>
</feature>
<feature type="topological domain" description="Mitochondrial intermembrane" evidence="3">
    <location>
        <begin position="1"/>
        <end position="26"/>
    </location>
</feature>
<feature type="transmembrane region" description="Helical" evidence="3">
    <location>
        <begin position="27"/>
        <end position="47"/>
    </location>
</feature>
<feature type="topological domain" description="Mitochondrial matrix" evidence="3">
    <location>
        <begin position="48"/>
        <end position="458"/>
    </location>
</feature>
<feature type="binding site" evidence="3">
    <location>
        <begin position="248"/>
        <end position="255"/>
    </location>
    <ligand>
        <name>ATP</name>
        <dbReference type="ChEBI" id="CHEBI:30616"/>
    </ligand>
</feature>
<organism>
    <name type="scientific">Dictyostelium discoideum</name>
    <name type="common">Social amoeba</name>
    <dbReference type="NCBI Taxonomy" id="44689"/>
    <lineage>
        <taxon>Eukaryota</taxon>
        <taxon>Amoebozoa</taxon>
        <taxon>Evosea</taxon>
        <taxon>Eumycetozoa</taxon>
        <taxon>Dictyostelia</taxon>
        <taxon>Dictyosteliales</taxon>
        <taxon>Dictyosteliaceae</taxon>
        <taxon>Dictyostelium</taxon>
    </lineage>
</organism>